<gene>
    <name evidence="1" type="primary">nudF-2</name>
    <name evidence="1" type="synonym">lis1-2</name>
    <name type="ORF">ACLA_091650</name>
</gene>
<evidence type="ECO:0000255" key="1">
    <source>
        <dbReference type="HAMAP-Rule" id="MF_03141"/>
    </source>
</evidence>
<organism>
    <name type="scientific">Aspergillus clavatus (strain ATCC 1007 / CBS 513.65 / DSM 816 / NCTC 3887 / NRRL 1 / QM 1276 / 107)</name>
    <dbReference type="NCBI Taxonomy" id="344612"/>
    <lineage>
        <taxon>Eukaryota</taxon>
        <taxon>Fungi</taxon>
        <taxon>Dikarya</taxon>
        <taxon>Ascomycota</taxon>
        <taxon>Pezizomycotina</taxon>
        <taxon>Eurotiomycetes</taxon>
        <taxon>Eurotiomycetidae</taxon>
        <taxon>Eurotiales</taxon>
        <taxon>Aspergillaceae</taxon>
        <taxon>Aspergillus</taxon>
        <taxon>Aspergillus subgen. Fumigati</taxon>
    </lineage>
</organism>
<accession>A1CF18</accession>
<feature type="chain" id="PRO_0000405067" description="Nuclear distribution protein nudF 2">
    <location>
        <begin position="1"/>
        <end position="435"/>
    </location>
</feature>
<feature type="domain" description="LisH" evidence="1">
    <location>
        <begin position="9"/>
        <end position="41"/>
    </location>
</feature>
<feature type="repeat" description="WD 1">
    <location>
        <begin position="86"/>
        <end position="125"/>
    </location>
</feature>
<feature type="repeat" description="WD 2">
    <location>
        <begin position="128"/>
        <end position="171"/>
    </location>
</feature>
<feature type="repeat" description="WD 3">
    <location>
        <begin position="175"/>
        <end position="214"/>
    </location>
</feature>
<feature type="repeat" description="WD 4">
    <location>
        <begin position="217"/>
        <end position="256"/>
    </location>
</feature>
<feature type="repeat" description="WD 5">
    <location>
        <begin position="280"/>
        <end position="320"/>
    </location>
</feature>
<feature type="repeat" description="WD 6">
    <location>
        <begin position="322"/>
        <end position="361"/>
    </location>
</feature>
<feature type="repeat" description="WD 7">
    <location>
        <begin position="366"/>
        <end position="396"/>
    </location>
</feature>
<feature type="repeat" description="WD 8">
    <location>
        <begin position="397"/>
        <end position="434"/>
    </location>
</feature>
<comment type="function">
    <text evidence="1">Positively regulates the activity of the minus-end directed microtubule motor protein dynein. May enhance dynein-mediated microtubule sliding by targeting dynein to the microtubule plus end. Required for nuclear migration during vegetative growth as well as development. Required for retrograde early endosome (EE) transport from the hyphal tip. Required for localization of dynein to the mitotic spindle poles. Recruits additional proteins to the dynein complex at SPBs.</text>
</comment>
<comment type="subunit">
    <text evidence="1">Self-associates. Interacts with nudE and dynein.</text>
</comment>
<comment type="subcellular location">
    <subcellularLocation>
        <location evidence="1">Cytoplasm</location>
        <location evidence="1">Cytoskeleton</location>
    </subcellularLocation>
    <subcellularLocation>
        <location evidence="1">Cytoplasm</location>
        <location evidence="1">Cytoskeleton</location>
        <location evidence="1">Spindle pole</location>
    </subcellularLocation>
    <text evidence="1">Localizes to the plus ends of microtubules at the hyphal tip and the mitotic spindle poles.</text>
</comment>
<comment type="domain">
    <text evidence="1">Dimerization mediated by the LisH domain may be required to activate dynein.</text>
</comment>
<comment type="similarity">
    <text evidence="1">Belongs to the WD repeat LIS1/nudF family.</text>
</comment>
<reference key="1">
    <citation type="journal article" date="2008" name="PLoS Genet.">
        <title>Genomic islands in the pathogenic filamentous fungus Aspergillus fumigatus.</title>
        <authorList>
            <person name="Fedorova N.D."/>
            <person name="Khaldi N."/>
            <person name="Joardar V.S."/>
            <person name="Maiti R."/>
            <person name="Amedeo P."/>
            <person name="Anderson M.J."/>
            <person name="Crabtree J."/>
            <person name="Silva J.C."/>
            <person name="Badger J.H."/>
            <person name="Albarraq A."/>
            <person name="Angiuoli S."/>
            <person name="Bussey H."/>
            <person name="Bowyer P."/>
            <person name="Cotty P.J."/>
            <person name="Dyer P.S."/>
            <person name="Egan A."/>
            <person name="Galens K."/>
            <person name="Fraser-Liggett C.M."/>
            <person name="Haas B.J."/>
            <person name="Inman J.M."/>
            <person name="Kent R."/>
            <person name="Lemieux S."/>
            <person name="Malavazi I."/>
            <person name="Orvis J."/>
            <person name="Roemer T."/>
            <person name="Ronning C.M."/>
            <person name="Sundaram J.P."/>
            <person name="Sutton G."/>
            <person name="Turner G."/>
            <person name="Venter J.C."/>
            <person name="White O.R."/>
            <person name="Whitty B.R."/>
            <person name="Youngman P."/>
            <person name="Wolfe K.H."/>
            <person name="Goldman G.H."/>
            <person name="Wortman J.R."/>
            <person name="Jiang B."/>
            <person name="Denning D.W."/>
            <person name="Nierman W.C."/>
        </authorList>
    </citation>
    <scope>NUCLEOTIDE SEQUENCE [LARGE SCALE GENOMIC DNA]</scope>
    <source>
        <strain>ATCC 1007 / CBS 513.65 / DSM 816 / NCTC 3887 / NRRL 1 / QM 1276 / 107</strain>
    </source>
</reference>
<protein>
    <recommendedName>
        <fullName evidence="1">Nuclear distribution protein nudF 2</fullName>
    </recommendedName>
    <alternativeName>
        <fullName evidence="1">Lissencephaly-1 homolog 2</fullName>
        <shortName evidence="1">LIS-1 2</shortName>
    </alternativeName>
</protein>
<name>LIS12_ASPCL</name>
<proteinExistence type="inferred from homology"/>
<keyword id="KW-0131">Cell cycle</keyword>
<keyword id="KW-0132">Cell division</keyword>
<keyword id="KW-0175">Coiled coil</keyword>
<keyword id="KW-0963">Cytoplasm</keyword>
<keyword id="KW-0206">Cytoskeleton</keyword>
<keyword id="KW-0493">Microtubule</keyword>
<keyword id="KW-0498">Mitosis</keyword>
<keyword id="KW-1185">Reference proteome</keyword>
<keyword id="KW-0677">Repeat</keyword>
<keyword id="KW-0813">Transport</keyword>
<keyword id="KW-0853">WD repeat</keyword>
<sequence length="435" mass="48261">MARLLTNSQAEELHKSIIAYLSANGLPETTAILRKELGVTEHDFNATAVKKYETLLEKNGPLLFAYRESRDSKAWLPQRPRYSLHSHRDTINCIAFHPKYSSIASGSDDCTIKIWDWELGELEVTLKGHTRAVRDLDYGSPPGAVGVLLASCSSDLTIKLWDPADGYKNIRTLQGHDHIVSAVRFIPNGSLLASASRDMDVRLWDVTNGYCVKTIQGHTGWVRDVCASLDGRFILSTGDDMTVRLWDISAKPENKLTMVGHENFNECCAIAPPTSYQYLAPLARLAKVSRAGSTAEFMATGSRDKTIKLWDARGTCLMTLTGHDNWVRAIVFHPGGRYLLSVSDDKTLRCWDLSQEGKCVKTIRDTHGGFITCLRWAPAILKDTPTDAARALVRQIPDVAEIMKNATFEESFSDVQIRCVVATGSVDKKLQIFAG</sequence>
<dbReference type="EMBL" id="DS027052">
    <property type="protein sequence ID" value="EAW11467.1"/>
    <property type="molecule type" value="Genomic_DNA"/>
</dbReference>
<dbReference type="RefSeq" id="XP_001272893.1">
    <property type="nucleotide sequence ID" value="XM_001272892.1"/>
</dbReference>
<dbReference type="SMR" id="A1CF18"/>
<dbReference type="STRING" id="344612.A1CF18"/>
<dbReference type="EnsemblFungi" id="EAW11467">
    <property type="protein sequence ID" value="EAW11467"/>
    <property type="gene ID" value="ACLA_091650"/>
</dbReference>
<dbReference type="GeneID" id="4705134"/>
<dbReference type="KEGG" id="act:ACLA_091650"/>
<dbReference type="VEuPathDB" id="FungiDB:ACLA_091650"/>
<dbReference type="eggNOG" id="KOG0295">
    <property type="taxonomic scope" value="Eukaryota"/>
</dbReference>
<dbReference type="HOGENOM" id="CLU_000288_57_15_1"/>
<dbReference type="OMA" id="RGTCLMT"/>
<dbReference type="OrthoDB" id="10264588at2759"/>
<dbReference type="Proteomes" id="UP000006701">
    <property type="component" value="Unassembled WGS sequence"/>
</dbReference>
<dbReference type="GO" id="GO:0005737">
    <property type="term" value="C:cytoplasm"/>
    <property type="evidence" value="ECO:0007669"/>
    <property type="project" value="UniProtKB-UniRule"/>
</dbReference>
<dbReference type="GO" id="GO:0005874">
    <property type="term" value="C:microtubule"/>
    <property type="evidence" value="ECO:0007669"/>
    <property type="project" value="UniProtKB-KW"/>
</dbReference>
<dbReference type="GO" id="GO:0005875">
    <property type="term" value="C:microtubule associated complex"/>
    <property type="evidence" value="ECO:0007669"/>
    <property type="project" value="UniProtKB-UniRule"/>
</dbReference>
<dbReference type="GO" id="GO:0000922">
    <property type="term" value="C:spindle pole"/>
    <property type="evidence" value="ECO:0007669"/>
    <property type="project" value="UniProtKB-SubCell"/>
</dbReference>
<dbReference type="GO" id="GO:1990234">
    <property type="term" value="C:transferase complex"/>
    <property type="evidence" value="ECO:0007669"/>
    <property type="project" value="UniProtKB-ARBA"/>
</dbReference>
<dbReference type="GO" id="GO:0070840">
    <property type="term" value="F:dynein complex binding"/>
    <property type="evidence" value="ECO:0007669"/>
    <property type="project" value="UniProtKB-UniRule"/>
</dbReference>
<dbReference type="GO" id="GO:0051301">
    <property type="term" value="P:cell division"/>
    <property type="evidence" value="ECO:0007669"/>
    <property type="project" value="UniProtKB-KW"/>
</dbReference>
<dbReference type="GO" id="GO:0000132">
    <property type="term" value="P:establishment of mitotic spindle orientation"/>
    <property type="evidence" value="ECO:0007669"/>
    <property type="project" value="UniProtKB-UniRule"/>
</dbReference>
<dbReference type="GO" id="GO:0051012">
    <property type="term" value="P:microtubule sliding"/>
    <property type="evidence" value="ECO:0007669"/>
    <property type="project" value="UniProtKB-UniRule"/>
</dbReference>
<dbReference type="CDD" id="cd00200">
    <property type="entry name" value="WD40"/>
    <property type="match status" value="1"/>
</dbReference>
<dbReference type="Gene3D" id="1.20.960.30">
    <property type="match status" value="1"/>
</dbReference>
<dbReference type="Gene3D" id="2.130.10.10">
    <property type="entry name" value="YVTN repeat-like/Quinoprotein amine dehydrogenase"/>
    <property type="match status" value="1"/>
</dbReference>
<dbReference type="HAMAP" id="MF_03141">
    <property type="entry name" value="lis1"/>
    <property type="match status" value="1"/>
</dbReference>
<dbReference type="InterPro" id="IPR017252">
    <property type="entry name" value="Dynein_regulator_LIS1"/>
</dbReference>
<dbReference type="InterPro" id="IPR020472">
    <property type="entry name" value="G-protein_beta_WD-40_rep"/>
</dbReference>
<dbReference type="InterPro" id="IPR037190">
    <property type="entry name" value="LIS1_N"/>
</dbReference>
<dbReference type="InterPro" id="IPR006594">
    <property type="entry name" value="LisH"/>
</dbReference>
<dbReference type="InterPro" id="IPR056795">
    <property type="entry name" value="PAC1-like_LisH-like_dom"/>
</dbReference>
<dbReference type="InterPro" id="IPR015943">
    <property type="entry name" value="WD40/YVTN_repeat-like_dom_sf"/>
</dbReference>
<dbReference type="InterPro" id="IPR019775">
    <property type="entry name" value="WD40_repeat_CS"/>
</dbReference>
<dbReference type="InterPro" id="IPR036322">
    <property type="entry name" value="WD40_repeat_dom_sf"/>
</dbReference>
<dbReference type="InterPro" id="IPR001680">
    <property type="entry name" value="WD40_rpt"/>
</dbReference>
<dbReference type="PANTHER" id="PTHR22847:SF637">
    <property type="entry name" value="WD REPEAT DOMAIN 5B"/>
    <property type="match status" value="1"/>
</dbReference>
<dbReference type="PANTHER" id="PTHR22847">
    <property type="entry name" value="WD40 REPEAT PROTEIN"/>
    <property type="match status" value="1"/>
</dbReference>
<dbReference type="Pfam" id="PF24951">
    <property type="entry name" value="LisH_PAC1"/>
    <property type="match status" value="1"/>
</dbReference>
<dbReference type="Pfam" id="PF00400">
    <property type="entry name" value="WD40"/>
    <property type="match status" value="6"/>
</dbReference>
<dbReference type="PIRSF" id="PIRSF037647">
    <property type="entry name" value="Dynein_regulator_Lis1"/>
    <property type="match status" value="1"/>
</dbReference>
<dbReference type="PRINTS" id="PR00320">
    <property type="entry name" value="GPROTEINBRPT"/>
</dbReference>
<dbReference type="SMART" id="SM00320">
    <property type="entry name" value="WD40"/>
    <property type="match status" value="7"/>
</dbReference>
<dbReference type="SUPFAM" id="SSF109925">
    <property type="entry name" value="Lissencephaly-1 protein (Lis-1, PAF-AH alpha) N-terminal domain"/>
    <property type="match status" value="1"/>
</dbReference>
<dbReference type="SUPFAM" id="SSF50978">
    <property type="entry name" value="WD40 repeat-like"/>
    <property type="match status" value="1"/>
</dbReference>
<dbReference type="PROSITE" id="PS50896">
    <property type="entry name" value="LISH"/>
    <property type="match status" value="1"/>
</dbReference>
<dbReference type="PROSITE" id="PS00678">
    <property type="entry name" value="WD_REPEATS_1"/>
    <property type="match status" value="3"/>
</dbReference>
<dbReference type="PROSITE" id="PS50082">
    <property type="entry name" value="WD_REPEATS_2"/>
    <property type="match status" value="6"/>
</dbReference>
<dbReference type="PROSITE" id="PS50294">
    <property type="entry name" value="WD_REPEATS_REGION"/>
    <property type="match status" value="1"/>
</dbReference>